<evidence type="ECO:0000255" key="1">
    <source>
        <dbReference type="HAMAP-Rule" id="MF_02108"/>
    </source>
</evidence>
<keyword id="KW-0119">Carbohydrate metabolism</keyword>
<keyword id="KW-0238">DNA-binding</keyword>
<keyword id="KW-0678">Repressor</keyword>
<keyword id="KW-0804">Transcription</keyword>
<keyword id="KW-0805">Transcription regulation</keyword>
<sequence>MLYLTKISNAGSEFTENEQKIADFLQANVSELQSVSSRQMAKQLGISQSSIVKFAQKLGAQGFTELRMALIGEYSASREKTNTTALHLHSSITSDDSLEVIARKLNREKELALEQTCALFDYARLQKIIEVISKAPFIQITGLGGSALVGRDLSFKLMKIGYRVACEADTHVQATVSQALKKGDVQIAISYSGSKKEIVLCVEAARKQGATVIAITSLADSPLRRLAHFTLDTVSGETEWRSSSMSTRTAQNSVTDLLFVGLVQLNDVASLKMIQRSSELTQRLK</sequence>
<accession>Q31Y52</accession>
<proteinExistence type="inferred from homology"/>
<organism>
    <name type="scientific">Shigella boydii serotype 4 (strain Sb227)</name>
    <dbReference type="NCBI Taxonomy" id="300268"/>
    <lineage>
        <taxon>Bacteria</taxon>
        <taxon>Pseudomonadati</taxon>
        <taxon>Pseudomonadota</taxon>
        <taxon>Gammaproteobacteria</taxon>
        <taxon>Enterobacterales</taxon>
        <taxon>Enterobacteriaceae</taxon>
        <taxon>Shigella</taxon>
    </lineage>
</organism>
<protein>
    <recommendedName>
        <fullName evidence="1">HTH-type transcriptional regulator MurR</fullName>
    </recommendedName>
    <alternativeName>
        <fullName evidence="1">MurPQ operon repressor</fullName>
    </alternativeName>
</protein>
<dbReference type="EMBL" id="CP000036">
    <property type="protein sequence ID" value="ABB67006.1"/>
    <property type="molecule type" value="Genomic_DNA"/>
</dbReference>
<dbReference type="RefSeq" id="WP_000966475.1">
    <property type="nucleotide sequence ID" value="NC_007613.1"/>
</dbReference>
<dbReference type="SMR" id="Q31Y52"/>
<dbReference type="KEGG" id="sbo:SBO_2452"/>
<dbReference type="HOGENOM" id="CLU_055769_0_2_6"/>
<dbReference type="UniPathway" id="UPA00342"/>
<dbReference type="Proteomes" id="UP000007067">
    <property type="component" value="Chromosome"/>
</dbReference>
<dbReference type="GO" id="GO:0097367">
    <property type="term" value="F:carbohydrate derivative binding"/>
    <property type="evidence" value="ECO:0007669"/>
    <property type="project" value="InterPro"/>
</dbReference>
<dbReference type="GO" id="GO:0003677">
    <property type="term" value="F:DNA binding"/>
    <property type="evidence" value="ECO:0007669"/>
    <property type="project" value="UniProtKB-KW"/>
</dbReference>
<dbReference type="GO" id="GO:0003700">
    <property type="term" value="F:DNA-binding transcription factor activity"/>
    <property type="evidence" value="ECO:0007669"/>
    <property type="project" value="UniProtKB-UniRule"/>
</dbReference>
<dbReference type="GO" id="GO:1901135">
    <property type="term" value="P:carbohydrate derivative metabolic process"/>
    <property type="evidence" value="ECO:0007669"/>
    <property type="project" value="InterPro"/>
</dbReference>
<dbReference type="GO" id="GO:0097173">
    <property type="term" value="P:N-acetylmuramic acid catabolic process"/>
    <property type="evidence" value="ECO:0007669"/>
    <property type="project" value="UniProtKB-UniPathway"/>
</dbReference>
<dbReference type="GO" id="GO:0045892">
    <property type="term" value="P:negative regulation of DNA-templated transcription"/>
    <property type="evidence" value="ECO:0007669"/>
    <property type="project" value="UniProtKB-UniRule"/>
</dbReference>
<dbReference type="GO" id="GO:0043470">
    <property type="term" value="P:regulation of carbohydrate catabolic process"/>
    <property type="evidence" value="ECO:0007669"/>
    <property type="project" value="UniProtKB-UniRule"/>
</dbReference>
<dbReference type="CDD" id="cd05013">
    <property type="entry name" value="SIS_RpiR"/>
    <property type="match status" value="1"/>
</dbReference>
<dbReference type="FunFam" id="3.40.50.10490:FF:000028">
    <property type="entry name" value="HTH-type transcriptional regulator MurR"/>
    <property type="match status" value="1"/>
</dbReference>
<dbReference type="Gene3D" id="3.40.50.10490">
    <property type="entry name" value="Glucose-6-phosphate isomerase like protein, domain 1"/>
    <property type="match status" value="1"/>
</dbReference>
<dbReference type="Gene3D" id="1.10.10.10">
    <property type="entry name" value="Winged helix-like DNA-binding domain superfamily/Winged helix DNA-binding domain"/>
    <property type="match status" value="1"/>
</dbReference>
<dbReference type="HAMAP" id="MF_02108">
    <property type="entry name" value="HTH_type_MurR"/>
    <property type="match status" value="1"/>
</dbReference>
<dbReference type="InterPro" id="IPR009057">
    <property type="entry name" value="Homeodomain-like_sf"/>
</dbReference>
<dbReference type="InterPro" id="IPR000281">
    <property type="entry name" value="HTH_RpiR"/>
</dbReference>
<dbReference type="InterPro" id="IPR047640">
    <property type="entry name" value="RpiR-like"/>
</dbReference>
<dbReference type="InterPro" id="IPR035472">
    <property type="entry name" value="RpiR-like_SIS"/>
</dbReference>
<dbReference type="InterPro" id="IPR001347">
    <property type="entry name" value="SIS_dom"/>
</dbReference>
<dbReference type="InterPro" id="IPR046348">
    <property type="entry name" value="SIS_dom_sf"/>
</dbReference>
<dbReference type="InterPro" id="IPR022821">
    <property type="entry name" value="Tscrpt_reg_HTH_MurR"/>
</dbReference>
<dbReference type="InterPro" id="IPR036388">
    <property type="entry name" value="WH-like_DNA-bd_sf"/>
</dbReference>
<dbReference type="NCBIfam" id="NF012026">
    <property type="entry name" value="PRK15482.1"/>
    <property type="match status" value="1"/>
</dbReference>
<dbReference type="PANTHER" id="PTHR30514">
    <property type="entry name" value="GLUCOKINASE"/>
    <property type="match status" value="1"/>
</dbReference>
<dbReference type="PANTHER" id="PTHR30514:SF17">
    <property type="entry name" value="HTH-TYPE TRANSCRIPTIONAL REGULATOR MURR"/>
    <property type="match status" value="1"/>
</dbReference>
<dbReference type="Pfam" id="PF01418">
    <property type="entry name" value="HTH_6"/>
    <property type="match status" value="1"/>
</dbReference>
<dbReference type="Pfam" id="PF01380">
    <property type="entry name" value="SIS"/>
    <property type="match status" value="1"/>
</dbReference>
<dbReference type="SUPFAM" id="SSF46689">
    <property type="entry name" value="Homeodomain-like"/>
    <property type="match status" value="1"/>
</dbReference>
<dbReference type="SUPFAM" id="SSF53697">
    <property type="entry name" value="SIS domain"/>
    <property type="match status" value="1"/>
</dbReference>
<dbReference type="PROSITE" id="PS51071">
    <property type="entry name" value="HTH_RPIR"/>
    <property type="match status" value="1"/>
</dbReference>
<dbReference type="PROSITE" id="PS51464">
    <property type="entry name" value="SIS"/>
    <property type="match status" value="1"/>
</dbReference>
<name>MURR_SHIBS</name>
<feature type="chain" id="PRO_0000387772" description="HTH-type transcriptional regulator MurR">
    <location>
        <begin position="1"/>
        <end position="285"/>
    </location>
</feature>
<feature type="domain" description="HTH rpiR-type" evidence="1">
    <location>
        <begin position="1"/>
        <end position="77"/>
    </location>
</feature>
<feature type="domain" description="SIS" evidence="1">
    <location>
        <begin position="128"/>
        <end position="279"/>
    </location>
</feature>
<feature type="DNA-binding region" description="H-T-H motif" evidence="1">
    <location>
        <begin position="37"/>
        <end position="56"/>
    </location>
</feature>
<comment type="function">
    <text evidence="1">Represses the expression of the murPQ operon involved in the uptake and degradation of N-acetylmuramic acid (MurNAc). Binds to two adjacent inverted repeats within the operator region. MurNAc 6-phosphate, the substrate of MurQ, is the specific inducer that weakens binding of MurR to the operator.</text>
</comment>
<comment type="pathway">
    <text>Amino-sugar metabolism; N-acetylmuramate degradation [regulation].</text>
</comment>
<comment type="subunit">
    <text evidence="1">Homotetramer.</text>
</comment>
<reference key="1">
    <citation type="journal article" date="2005" name="Nucleic Acids Res.">
        <title>Genome dynamics and diversity of Shigella species, the etiologic agents of bacillary dysentery.</title>
        <authorList>
            <person name="Yang F."/>
            <person name="Yang J."/>
            <person name="Zhang X."/>
            <person name="Chen L."/>
            <person name="Jiang Y."/>
            <person name="Yan Y."/>
            <person name="Tang X."/>
            <person name="Wang J."/>
            <person name="Xiong Z."/>
            <person name="Dong J."/>
            <person name="Xue Y."/>
            <person name="Zhu Y."/>
            <person name="Xu X."/>
            <person name="Sun L."/>
            <person name="Chen S."/>
            <person name="Nie H."/>
            <person name="Peng J."/>
            <person name="Xu J."/>
            <person name="Wang Y."/>
            <person name="Yuan Z."/>
            <person name="Wen Y."/>
            <person name="Yao Z."/>
            <person name="Shen Y."/>
            <person name="Qiang B."/>
            <person name="Hou Y."/>
            <person name="Yu J."/>
            <person name="Jin Q."/>
        </authorList>
    </citation>
    <scope>NUCLEOTIDE SEQUENCE [LARGE SCALE GENOMIC DNA]</scope>
    <source>
        <strain>Sb227</strain>
    </source>
</reference>
<gene>
    <name evidence="1" type="primary">murR</name>
    <name type="ordered locus">SBO_2452</name>
</gene>